<dbReference type="EMBL" id="CP000703">
    <property type="protein sequence ID" value="ABQ50221.1"/>
    <property type="molecule type" value="Genomic_DNA"/>
</dbReference>
<dbReference type="RefSeq" id="WP_000792559.1">
    <property type="nucleotide sequence ID" value="NC_009487.1"/>
</dbReference>
<dbReference type="SMR" id="A5IVJ8"/>
<dbReference type="KEGG" id="saj:SaurJH9_2444"/>
<dbReference type="HOGENOM" id="CLU_051343_0_0_9"/>
<dbReference type="PRO" id="PR:A5IVJ8"/>
<dbReference type="GO" id="GO:0005576">
    <property type="term" value="C:extracellular region"/>
    <property type="evidence" value="ECO:0007669"/>
    <property type="project" value="UniProtKB-SubCell"/>
</dbReference>
<dbReference type="GO" id="GO:0005886">
    <property type="term" value="C:plasma membrane"/>
    <property type="evidence" value="ECO:0007669"/>
    <property type="project" value="UniProtKB-SubCell"/>
</dbReference>
<dbReference type="GO" id="GO:0019864">
    <property type="term" value="F:IgG binding"/>
    <property type="evidence" value="ECO:0007669"/>
    <property type="project" value="UniProtKB-KW"/>
</dbReference>
<dbReference type="Gene3D" id="1.20.5.420">
    <property type="entry name" value="Immunoglobulin FC, subunit C"/>
    <property type="match status" value="2"/>
</dbReference>
<dbReference type="Gene3D" id="1.10.10.1270">
    <property type="entry name" value="Sbi, C3 binding domain IV"/>
    <property type="match status" value="1"/>
</dbReference>
<dbReference type="InterPro" id="IPR009063">
    <property type="entry name" value="Ig/albumin-bd_sf"/>
</dbReference>
<dbReference type="InterPro" id="IPR021657">
    <property type="entry name" value="IgG-binding_Sbi_dom_IV"/>
</dbReference>
<dbReference type="InterPro" id="IPR003132">
    <property type="entry name" value="Protein_A_Ig-bd"/>
</dbReference>
<dbReference type="InterPro" id="IPR041909">
    <property type="entry name" value="Sbi_C3_db_domIV"/>
</dbReference>
<dbReference type="Pfam" id="PF02216">
    <property type="entry name" value="B"/>
    <property type="match status" value="2"/>
</dbReference>
<dbReference type="Pfam" id="PF11621">
    <property type="entry name" value="Sbi-IV"/>
    <property type="match status" value="1"/>
</dbReference>
<dbReference type="SUPFAM" id="SSF46997">
    <property type="entry name" value="Bacterial immunoglobulin/albumin-binding domains"/>
    <property type="match status" value="2"/>
</dbReference>
<gene>
    <name type="primary">sbi</name>
    <name type="ordered locus">SaurJH9_2444</name>
</gene>
<organism>
    <name type="scientific">Staphylococcus aureus (strain JH9)</name>
    <dbReference type="NCBI Taxonomy" id="359786"/>
    <lineage>
        <taxon>Bacteria</taxon>
        <taxon>Bacillati</taxon>
        <taxon>Bacillota</taxon>
        <taxon>Bacilli</taxon>
        <taxon>Bacillales</taxon>
        <taxon>Staphylococcaceae</taxon>
        <taxon>Staphylococcus</taxon>
    </lineage>
</organism>
<name>SBI_STAA9</name>
<protein>
    <recommendedName>
        <fullName>Immunoglobulin-binding protein Sbi</fullName>
    </recommendedName>
</protein>
<evidence type="ECO:0000250" key="1">
    <source>
        <dbReference type="UniProtKB" id="A6QJQ7"/>
    </source>
</evidence>
<evidence type="ECO:0000250" key="2">
    <source>
        <dbReference type="UniProtKB" id="Q931F4"/>
    </source>
</evidence>
<evidence type="ECO:0000255" key="3"/>
<evidence type="ECO:0000256" key="4">
    <source>
        <dbReference type="SAM" id="MobiDB-lite"/>
    </source>
</evidence>
<evidence type="ECO:0000305" key="5"/>
<keyword id="KW-1003">Cell membrane</keyword>
<keyword id="KW-0390">IgG-binding protein</keyword>
<keyword id="KW-0472">Membrane</keyword>
<keyword id="KW-0677">Repeat</keyword>
<keyword id="KW-0964">Secreted</keyword>
<keyword id="KW-0732">Signal</keyword>
<keyword id="KW-0843">Virulence</keyword>
<feature type="signal peptide" evidence="3">
    <location>
        <begin position="1"/>
        <end position="29"/>
    </location>
</feature>
<feature type="chain" id="PRO_5000247393" description="Immunoglobulin-binding protein Sbi">
    <location>
        <begin position="30"/>
        <end position="436"/>
    </location>
</feature>
<feature type="repeat" description="B 1">
    <location>
        <begin position="43"/>
        <end position="94"/>
    </location>
</feature>
<feature type="repeat" description="B 2">
    <location>
        <begin position="95"/>
        <end position="148"/>
    </location>
</feature>
<feature type="repeat" description="2-1">
    <location>
        <begin position="267"/>
        <end position="271"/>
    </location>
</feature>
<feature type="repeat" description="2-2">
    <location>
        <begin position="272"/>
        <end position="276"/>
    </location>
</feature>
<feature type="repeat" description="2-3">
    <location>
        <begin position="277"/>
        <end position="281"/>
    </location>
</feature>
<feature type="repeat" description="2-4">
    <location>
        <begin position="282"/>
        <end position="286"/>
    </location>
</feature>
<feature type="repeat" description="2-5">
    <location>
        <begin position="287"/>
        <end position="291"/>
    </location>
</feature>
<feature type="repeat" description="2-6">
    <location>
        <begin position="292"/>
        <end position="296"/>
    </location>
</feature>
<feature type="repeat" description="2-7">
    <location>
        <begin position="297"/>
        <end position="301"/>
    </location>
</feature>
<feature type="repeat" description="2-8">
    <location>
        <begin position="302"/>
        <end position="306"/>
    </location>
</feature>
<feature type="region of interest" description="Sbi-I">
    <location>
        <begin position="42"/>
        <end position="94"/>
    </location>
</feature>
<feature type="region of interest" description="Sbi-II">
    <location>
        <begin position="103"/>
        <end position="153"/>
    </location>
</feature>
<feature type="region of interest" description="Sbi-III">
    <location>
        <begin position="154"/>
        <end position="195"/>
    </location>
</feature>
<feature type="region of interest" description="Sbi-IV">
    <location>
        <begin position="196"/>
        <end position="253"/>
    </location>
</feature>
<feature type="region of interest" description="8 X 5 AA tandem repeat of P-[KQ]-[AISV]-[EKQ]-[AKLSV]">
    <location>
        <begin position="267"/>
        <end position="306"/>
    </location>
</feature>
<feature type="region of interest" description="Disordered" evidence="4">
    <location>
        <begin position="267"/>
        <end position="295"/>
    </location>
</feature>
<accession>A5IVJ8</accession>
<reference key="1">
    <citation type="submission" date="2007-05" db="EMBL/GenBank/DDBJ databases">
        <title>Complete sequence of chromosome of Staphylococcus aureus subsp. aureus JH9.</title>
        <authorList>
            <consortium name="US DOE Joint Genome Institute"/>
            <person name="Copeland A."/>
            <person name="Lucas S."/>
            <person name="Lapidus A."/>
            <person name="Barry K."/>
            <person name="Detter J.C."/>
            <person name="Glavina del Rio T."/>
            <person name="Hammon N."/>
            <person name="Israni S."/>
            <person name="Pitluck S."/>
            <person name="Chain P."/>
            <person name="Malfatti S."/>
            <person name="Shin M."/>
            <person name="Vergez L."/>
            <person name="Schmutz J."/>
            <person name="Larimer F."/>
            <person name="Land M."/>
            <person name="Hauser L."/>
            <person name="Kyrpides N."/>
            <person name="Kim E."/>
            <person name="Tomasz A."/>
            <person name="Richardson P."/>
        </authorList>
    </citation>
    <scope>NUCLEOTIDE SEQUENCE [LARGE SCALE GENOMIC DNA]</scope>
    <source>
        <strain>JH9</strain>
    </source>
</reference>
<comment type="function">
    <text evidence="1">Plays a role in the inhibition of both the innate and adaptive immune responses. Possesses two N-terminal domains that bind the Fc region of IgG and two domains that form a tripartite complex with complement factors C3b and CFH. By recruiting CFH and C3b, the secreted form acts as a potent complement inhibitor of the alternative pathway-mediated lysis.</text>
</comment>
<comment type="subunit">
    <text evidence="1 2">Interacts (via sbi-I and sbi-II domains) with the Fc region of mammalian immunoglobulin G (IgG) proteins. Interacts (via sbi-III and sbi-IV domains) with host complement C3. Interacts (via sbi-III and sbi-IV domains) with host CFH (By similarity). Interacts (via sbi-IV domain) with beta-2-glycoprotein 1/APOH (By similarity).</text>
</comment>
<comment type="subcellular location">
    <subcellularLocation>
        <location evidence="1">Secreted</location>
    </subcellularLocation>
    <subcellularLocation>
        <location evidence="1">Cell membrane</location>
    </subcellularLocation>
    <text evidence="1">Occurs both extracellularly and associated with the cytoplasmic membrane where only the domains I and II are exposed to the extracellular media. Membrane association occurs via binding to lipoteichoic acid.</text>
</comment>
<comment type="domain">
    <text evidence="1">Sbi-I and sbi-II domains provide protection only when anchored to the cell surface, whereas only the secreted sbi-III and sbi-IV domains are biologically active.</text>
</comment>
<comment type="similarity">
    <text evidence="5">Belongs to the immunoglobulin-binding protein Sbi family.</text>
</comment>
<sequence length="436" mass="50042">MKNKYISKLLVGAATITLATMISNGEAKASENTQQTSTKHQTTQNNYVTDQQKAFYQVLHLKGITEEQRNQYIKTLREHPERAQEVFSESLKDSKNPDRRVAQQNAFYNVLKNDNLTEQEKNNYIAQIKENPDRSQQVWVESVQSSKAKERQNIENADKAIKDFQDNKAPHDKSAAYEANSKLPKDLRDKNNRFVEKVSIEKAIVRHDERVKSANDAISKLNEKDSIENRRLAQREVNKAPMDVKEHLQKQLDALVAQKDAEKKVAPKVEAPQIQSPQIEKPKAESPKVEVPQIQSPKVEVPQSKLLGYYQSLKDSFNYGYKYLTDTYKSYKEKYDTAKYYYNTYYKYKGAIDQTVLTVLGSGSKSYIQPLKVDDKNGYLAKSYAQVRNYVTESINTGKVLYTFYQNPTLVKTAIKAQETASSIKNTLSNLLSFWK</sequence>
<proteinExistence type="inferred from homology"/>